<organism>
    <name type="scientific">Aspergillus awamori</name>
    <name type="common">Black koji mold</name>
    <dbReference type="NCBI Taxonomy" id="105351"/>
    <lineage>
        <taxon>Eukaryota</taxon>
        <taxon>Fungi</taxon>
        <taxon>Dikarya</taxon>
        <taxon>Ascomycota</taxon>
        <taxon>Pezizomycotina</taxon>
        <taxon>Eurotiomycetes</taxon>
        <taxon>Eurotiomycetidae</taxon>
        <taxon>Eurotiales</taxon>
        <taxon>Aspergillaceae</taxon>
        <taxon>Aspergillus</taxon>
    </lineage>
</organism>
<proteinExistence type="inferred from homology"/>
<accession>Q02906</accession>
<comment type="catalytic activity">
    <reaction>
        <text>Endohydrolysis of (1-&gt;4)-alpha-D-glucosidic linkages in polysaccharides containing three or more (1-&gt;4)-alpha-linked D-glucose units.</text>
        <dbReference type="EC" id="3.2.1.1"/>
    </reaction>
</comment>
<comment type="cofactor">
    <cofactor evidence="1">
        <name>Ca(2+)</name>
        <dbReference type="ChEBI" id="CHEBI:29108"/>
    </cofactor>
    <text evidence="1">Binds 2 calcium ions per subunit. Calcium is inhibitory at high concentrations.</text>
</comment>
<comment type="similarity">
    <text evidence="4">Belongs to the glycosyl hydrolase 13 family.</text>
</comment>
<feature type="signal peptide" evidence="3">
    <location>
        <begin position="1"/>
        <end position="21"/>
    </location>
</feature>
<feature type="chain" id="PRO_0000001348" description="Alpha-amylase B">
    <location>
        <begin position="22"/>
        <end position="499"/>
    </location>
</feature>
<feature type="active site" description="Nucleophile" evidence="2">
    <location>
        <position position="227"/>
    </location>
</feature>
<feature type="active site" description="Proton donor" evidence="2">
    <location>
        <position position="251"/>
    </location>
</feature>
<feature type="binding site" evidence="1">
    <location>
        <position position="56"/>
    </location>
    <ligand>
        <name>substrate</name>
    </ligand>
</feature>
<feature type="binding site" evidence="1">
    <location>
        <position position="104"/>
    </location>
    <ligand>
        <name>substrate</name>
    </ligand>
</feature>
<feature type="binding site" evidence="1">
    <location>
        <position position="142"/>
    </location>
    <ligand>
        <name>Ca(2+)</name>
        <dbReference type="ChEBI" id="CHEBI:29108"/>
        <label>1</label>
    </ligand>
</feature>
<feature type="binding site" evidence="1">
    <location>
        <position position="143"/>
    </location>
    <ligand>
        <name>substrate</name>
    </ligand>
</feature>
<feature type="binding site" evidence="2">
    <location>
        <position position="183"/>
    </location>
    <ligand>
        <name>Ca(2+)</name>
        <dbReference type="ChEBI" id="CHEBI:29108"/>
        <label>1</label>
    </ligand>
</feature>
<feature type="binding site" evidence="2">
    <location>
        <position position="196"/>
    </location>
    <ligand>
        <name>Ca(2+)</name>
        <dbReference type="ChEBI" id="CHEBI:29108"/>
        <label>1</label>
    </ligand>
</feature>
<feature type="binding site" evidence="1">
    <location>
        <position position="225"/>
    </location>
    <ligand>
        <name>substrate</name>
    </ligand>
</feature>
<feature type="binding site" evidence="1">
    <location>
        <position position="227"/>
    </location>
    <ligand>
        <name>Ca(2+)</name>
        <dbReference type="ChEBI" id="CHEBI:29108"/>
        <label>2</label>
    </ligand>
</feature>
<feature type="binding site" evidence="1">
    <location>
        <begin position="230"/>
        <end position="231"/>
    </location>
    <ligand>
        <name>substrate</name>
    </ligand>
</feature>
<feature type="binding site" evidence="1">
    <location>
        <position position="231"/>
    </location>
    <ligand>
        <name>Ca(2+)</name>
        <dbReference type="ChEBI" id="CHEBI:29108"/>
        <label>1</label>
    </ligand>
</feature>
<feature type="binding site" evidence="1">
    <location>
        <position position="251"/>
    </location>
    <ligand>
        <name>Ca(2+)</name>
        <dbReference type="ChEBI" id="CHEBI:29108"/>
        <label>2</label>
    </ligand>
</feature>
<feature type="binding site" evidence="1">
    <location>
        <position position="255"/>
    </location>
    <ligand>
        <name>substrate</name>
    </ligand>
</feature>
<feature type="binding site" evidence="1">
    <location>
        <position position="318"/>
    </location>
    <ligand>
        <name>substrate</name>
    </ligand>
</feature>
<feature type="binding site" evidence="1">
    <location>
        <position position="365"/>
    </location>
    <ligand>
        <name>substrate</name>
    </ligand>
</feature>
<feature type="site" description="Transition state stabilizer" evidence="1">
    <location>
        <position position="318"/>
    </location>
</feature>
<feature type="glycosylation site" description="N-linked (GlcNAc...) asparagine" evidence="3">
    <location>
        <position position="218"/>
    </location>
</feature>
<feature type="disulfide bond" evidence="2">
    <location>
        <begin position="51"/>
        <end position="59"/>
    </location>
</feature>
<feature type="disulfide bond" evidence="2">
    <location>
        <begin position="171"/>
        <end position="185"/>
    </location>
</feature>
<feature type="disulfide bond" evidence="2">
    <location>
        <begin position="261"/>
        <end position="304"/>
    </location>
</feature>
<feature type="disulfide bond" evidence="2">
    <location>
        <begin position="461"/>
        <end position="496"/>
    </location>
</feature>
<evidence type="ECO:0000250" key="1">
    <source>
        <dbReference type="UniProtKB" id="P0C1B3"/>
    </source>
</evidence>
<evidence type="ECO:0000250" key="2">
    <source>
        <dbReference type="UniProtKB" id="P56271"/>
    </source>
</evidence>
<evidence type="ECO:0000255" key="3"/>
<evidence type="ECO:0000305" key="4"/>
<reference key="1">
    <citation type="journal article" date="1990" name="Curr. Genet.">
        <title>Cloning, characterization, and expression of two alpha-amylase genes from Aspergillus niger var. awamori.</title>
        <authorList>
            <person name="Korman D.R."/>
            <person name="Bayliss F.T."/>
            <person name="Barnett C.C."/>
            <person name="Carmona C.L."/>
            <person name="Kodama K.H."/>
            <person name="Royer T.J."/>
            <person name="Thompson S.A."/>
            <person name="Ward M."/>
            <person name="Wilson L.J."/>
            <person name="Berka R.M."/>
        </authorList>
    </citation>
    <scope>NUCLEOTIDE SEQUENCE [GENOMIC DNA]</scope>
    <source>
        <strain>UVK143F</strain>
    </source>
</reference>
<protein>
    <recommendedName>
        <fullName>Alpha-amylase B</fullName>
        <ecNumber>3.2.1.1</ecNumber>
    </recommendedName>
    <alternativeName>
        <fullName>1,4-alpha-D-glucan glucanohydrolase B</fullName>
    </alternativeName>
</protein>
<sequence length="499" mass="54921">MMVAWWSLFLYGLQVAAPALAATPADWRSQSIYFLLTDRFARTDGSTTATCNTADQKYCGGTWQGIIDKLDYIQGMGFTAIWITPVTAQLPQTTAYGDAYHGYWQQDIYSLNENYGTADDLKALSSALHERGMYLMVDVVANHMGYDGAGSSVDYSVFKPFSSQDYFHPFCFIQNYEDQTQVEDCWLGDNTVSLPDLDTTKDVVKNEWYDWVGSLVSNYSIDGLRIDTVKHVQKDFWPGYNKAAGVYCIGEVLDGDPAYTCPYQNVMDGVLNYPIYYPLLNAFKSTSGSMDDLYNMINTVKSDCPDSTLLGTFVENHDNPRFASYTNDIALAKNVAAFIILNDGIPIIYAGQEQHYAGGNDPANREATWLSGYPTDSELYKLIASRNAIRNYAISKDTGFVTYKNWPIYKDDTTIPMRKGTDGSQIVTILSNKGASGDSYTLSLSGAGYTAGQQLTEVIGCTTVTVGSDGNVPVPMAGGLPRVLYPTEKLAGSKICSSS</sequence>
<gene>
    <name type="primary">amyB</name>
</gene>
<name>AMYB_ASPAW</name>
<dbReference type="EC" id="3.2.1.1"/>
<dbReference type="EMBL" id="X52756">
    <property type="protein sequence ID" value="CAA36967.1"/>
    <property type="molecule type" value="Genomic_DNA"/>
</dbReference>
<dbReference type="PIR" id="B48305">
    <property type="entry name" value="B48305"/>
</dbReference>
<dbReference type="SMR" id="Q02906"/>
<dbReference type="CAZy" id="GH13">
    <property type="family name" value="Glycoside Hydrolase Family 13"/>
</dbReference>
<dbReference type="GlyCosmos" id="Q02906">
    <property type="glycosylation" value="1 site, No reported glycans"/>
</dbReference>
<dbReference type="GO" id="GO:0004556">
    <property type="term" value="F:alpha-amylase activity"/>
    <property type="evidence" value="ECO:0007669"/>
    <property type="project" value="UniProtKB-EC"/>
</dbReference>
<dbReference type="GO" id="GO:0005509">
    <property type="term" value="F:calcium ion binding"/>
    <property type="evidence" value="ECO:0007669"/>
    <property type="project" value="InterPro"/>
</dbReference>
<dbReference type="GO" id="GO:0016052">
    <property type="term" value="P:carbohydrate catabolic process"/>
    <property type="evidence" value="ECO:0007669"/>
    <property type="project" value="InterPro"/>
</dbReference>
<dbReference type="CDD" id="cd11319">
    <property type="entry name" value="AmyAc_euk_AmyA"/>
    <property type="match status" value="1"/>
</dbReference>
<dbReference type="FunFam" id="2.60.40.1180:FF:000037">
    <property type="entry name" value="Alpha-amylase A"/>
    <property type="match status" value="1"/>
</dbReference>
<dbReference type="FunFam" id="3.20.20.80:FF:000120">
    <property type="entry name" value="Alpha-amylase A"/>
    <property type="match status" value="1"/>
</dbReference>
<dbReference type="Gene3D" id="3.20.20.80">
    <property type="entry name" value="Glycosidases"/>
    <property type="match status" value="1"/>
</dbReference>
<dbReference type="Gene3D" id="2.60.40.1180">
    <property type="entry name" value="Golgi alpha-mannosidase II"/>
    <property type="match status" value="1"/>
</dbReference>
<dbReference type="InterPro" id="IPR013777">
    <property type="entry name" value="A-amylase-like"/>
</dbReference>
<dbReference type="InterPro" id="IPR015340">
    <property type="entry name" value="A_amylase_C_dom"/>
</dbReference>
<dbReference type="InterPro" id="IPR006046">
    <property type="entry name" value="Alpha_amylase"/>
</dbReference>
<dbReference type="InterPro" id="IPR006047">
    <property type="entry name" value="Glyco_hydro_13_cat_dom"/>
</dbReference>
<dbReference type="InterPro" id="IPR013780">
    <property type="entry name" value="Glyco_hydro_b"/>
</dbReference>
<dbReference type="InterPro" id="IPR017853">
    <property type="entry name" value="Glycoside_hydrolase_SF"/>
</dbReference>
<dbReference type="PANTHER" id="PTHR10357:SF215">
    <property type="entry name" value="ALPHA-AMYLASE 1"/>
    <property type="match status" value="1"/>
</dbReference>
<dbReference type="PANTHER" id="PTHR10357">
    <property type="entry name" value="ALPHA-AMYLASE FAMILY MEMBER"/>
    <property type="match status" value="1"/>
</dbReference>
<dbReference type="Pfam" id="PF09260">
    <property type="entry name" value="A_amylase_dom_C"/>
    <property type="match status" value="1"/>
</dbReference>
<dbReference type="Pfam" id="PF00128">
    <property type="entry name" value="Alpha-amylase"/>
    <property type="match status" value="1"/>
</dbReference>
<dbReference type="PIRSF" id="PIRSF001024">
    <property type="entry name" value="Alph-amyl_fung"/>
    <property type="match status" value="1"/>
</dbReference>
<dbReference type="PRINTS" id="PR00110">
    <property type="entry name" value="ALPHAAMYLASE"/>
</dbReference>
<dbReference type="SMART" id="SM00642">
    <property type="entry name" value="Aamy"/>
    <property type="match status" value="1"/>
</dbReference>
<dbReference type="SUPFAM" id="SSF51445">
    <property type="entry name" value="(Trans)glycosidases"/>
    <property type="match status" value="1"/>
</dbReference>
<dbReference type="SUPFAM" id="SSF51011">
    <property type="entry name" value="Glycosyl hydrolase domain"/>
    <property type="match status" value="1"/>
</dbReference>
<keyword id="KW-0106">Calcium</keyword>
<keyword id="KW-0119">Carbohydrate metabolism</keyword>
<keyword id="KW-1015">Disulfide bond</keyword>
<keyword id="KW-0325">Glycoprotein</keyword>
<keyword id="KW-0326">Glycosidase</keyword>
<keyword id="KW-0378">Hydrolase</keyword>
<keyword id="KW-0479">Metal-binding</keyword>
<keyword id="KW-0732">Signal</keyword>